<evidence type="ECO:0000250" key="1"/>
<evidence type="ECO:0000305" key="2"/>
<keyword id="KW-0903">Direct protein sequencing</keyword>
<keyword id="KW-1015">Disulfide bond</keyword>
<keyword id="KW-0372">Hormone</keyword>
<keyword id="KW-0479">Metal-binding</keyword>
<keyword id="KW-0964">Secreted</keyword>
<keyword id="KW-0732">Signal</keyword>
<keyword id="KW-0862">Zinc</keyword>
<feature type="signal peptide">
    <location>
        <begin position="1"/>
        <end position="22"/>
    </location>
</feature>
<feature type="chain" id="PRO_0000033033" description="Somatotropin">
    <location>
        <begin position="23"/>
        <end position="210"/>
    </location>
</feature>
<feature type="binding site" evidence="1">
    <location>
        <position position="38"/>
    </location>
    <ligand>
        <name>Zn(2+)</name>
        <dbReference type="ChEBI" id="CHEBI:29105"/>
    </ligand>
</feature>
<feature type="binding site" evidence="1">
    <location>
        <position position="192"/>
    </location>
    <ligand>
        <name>Zn(2+)</name>
        <dbReference type="ChEBI" id="CHEBI:29105"/>
    </ligand>
</feature>
<feature type="disulfide bond" evidence="1">
    <location>
        <begin position="71"/>
        <end position="183"/>
    </location>
</feature>
<feature type="disulfide bond" evidence="1">
    <location>
        <begin position="200"/>
        <end position="208"/>
    </location>
</feature>
<organism>
    <name type="scientific">Oncorhynchus keta</name>
    <name type="common">Chum salmon</name>
    <name type="synonym">Salmo keta</name>
    <dbReference type="NCBI Taxonomy" id="8018"/>
    <lineage>
        <taxon>Eukaryota</taxon>
        <taxon>Metazoa</taxon>
        <taxon>Chordata</taxon>
        <taxon>Craniata</taxon>
        <taxon>Vertebrata</taxon>
        <taxon>Euteleostomi</taxon>
        <taxon>Actinopterygii</taxon>
        <taxon>Neopterygii</taxon>
        <taxon>Teleostei</taxon>
        <taxon>Protacanthopterygii</taxon>
        <taxon>Salmoniformes</taxon>
        <taxon>Salmonidae</taxon>
        <taxon>Salmoninae</taxon>
        <taxon>Oncorhynchus</taxon>
    </lineage>
</organism>
<comment type="function">
    <text>Growth hormone plays an important role in growth control and is involved in the regulation of several anabolic processes. Implicated as an osmoregulatory substance important for seawater adaptation.</text>
</comment>
<comment type="subcellular location">
    <subcellularLocation>
        <location>Secreted</location>
    </subcellularLocation>
</comment>
<comment type="similarity">
    <text evidence="2">Belongs to the somatotropin/prolactin family.</text>
</comment>
<sequence>MGQVFLLMPVLLVSCFLSQGAAIENQRLFNIAVSRVQHLHLLAQKMFNDFDGTLLPDERRQLNKIFLLDFCNSDSIVSPVDKHETQKSSVLKLLHISFRLIESWEYPSQTLIISNSLMVRNANQISEKLSDLKVGINLLITGSQDGVLSLDDNDSQQLPPYGNYYQNLGGDGNVRRNYELLACFKKDMHKVETYLTVAKCRKSLEANCTL</sequence>
<name>SOMA_ONCKE</name>
<reference key="1">
    <citation type="journal article" date="1985" name="Proc. Natl. Acad. Sci. U.S.A.">
        <title>Cloning and expression of cDNA for salmon growth hormone in Escherichia coli.</title>
        <authorList>
            <person name="Sekine S."/>
            <person name="Mizukami T."/>
            <person name="Nishi T."/>
            <person name="Kuwana Y."/>
            <person name="Saito A."/>
            <person name="Sato M."/>
            <person name="Itoh S."/>
            <person name="Kawauchi H."/>
        </authorList>
    </citation>
    <scope>NUCLEOTIDE SEQUENCE [MRNA]</scope>
</reference>
<reference key="2">
    <citation type="journal article" date="1986" name="Arch. Biochem. Biophys.">
        <title>Isolation and characterization of chum salmon growth hormone.</title>
        <authorList>
            <person name="Kawauchi H."/>
            <person name="Moriyama S."/>
            <person name="Yasuda A."/>
            <person name="Yamaguchi K."/>
            <person name="Shirahata K."/>
            <person name="Kubota J."/>
            <person name="Hirano T."/>
        </authorList>
    </citation>
    <scope>PARTIAL PROTEIN SEQUENCE</scope>
</reference>
<accession>P07064</accession>
<gene>
    <name type="primary">gh</name>
</gene>
<dbReference type="EMBL" id="K03050">
    <property type="protein sequence ID" value="AAA49403.1"/>
    <property type="molecule type" value="mRNA"/>
</dbReference>
<dbReference type="PIR" id="A23154">
    <property type="entry name" value="A23154"/>
</dbReference>
<dbReference type="SMR" id="P07064"/>
<dbReference type="GO" id="GO:0005829">
    <property type="term" value="C:cytosol"/>
    <property type="evidence" value="ECO:0000250"/>
    <property type="project" value="AgBase"/>
</dbReference>
<dbReference type="GO" id="GO:0005615">
    <property type="term" value="C:extracellular space"/>
    <property type="evidence" value="ECO:0000250"/>
    <property type="project" value="AgBase"/>
</dbReference>
<dbReference type="GO" id="GO:0070186">
    <property type="term" value="F:growth hormone activity"/>
    <property type="evidence" value="ECO:0007669"/>
    <property type="project" value="TreeGrafter"/>
</dbReference>
<dbReference type="GO" id="GO:0005131">
    <property type="term" value="F:growth hormone receptor binding"/>
    <property type="evidence" value="ECO:0000250"/>
    <property type="project" value="AgBase"/>
</dbReference>
<dbReference type="GO" id="GO:0046872">
    <property type="term" value="F:metal ion binding"/>
    <property type="evidence" value="ECO:0007669"/>
    <property type="project" value="UniProtKB-KW"/>
</dbReference>
<dbReference type="GO" id="GO:0048513">
    <property type="term" value="P:animal organ development"/>
    <property type="evidence" value="ECO:0007669"/>
    <property type="project" value="TreeGrafter"/>
</dbReference>
<dbReference type="GO" id="GO:0055074">
    <property type="term" value="P:calcium ion homeostasis"/>
    <property type="evidence" value="ECO:0000315"/>
    <property type="project" value="AgBase"/>
</dbReference>
<dbReference type="GO" id="GO:0055064">
    <property type="term" value="P:chloride ion homeostasis"/>
    <property type="evidence" value="ECO:0000250"/>
    <property type="project" value="AgBase"/>
</dbReference>
<dbReference type="GO" id="GO:0060396">
    <property type="term" value="P:growth hormone receptor signaling pathway"/>
    <property type="evidence" value="ECO:0007669"/>
    <property type="project" value="TreeGrafter"/>
</dbReference>
<dbReference type="GO" id="GO:0042538">
    <property type="term" value="P:hyperosmotic salinity response"/>
    <property type="evidence" value="ECO:0000315"/>
    <property type="project" value="AgBase"/>
</dbReference>
<dbReference type="GO" id="GO:0010960">
    <property type="term" value="P:magnesium ion homeostasis"/>
    <property type="evidence" value="ECO:0000315"/>
    <property type="project" value="AgBase"/>
</dbReference>
<dbReference type="GO" id="GO:0010628">
    <property type="term" value="P:positive regulation of gene expression"/>
    <property type="evidence" value="ECO:0000250"/>
    <property type="project" value="AgBase"/>
</dbReference>
<dbReference type="GO" id="GO:0045927">
    <property type="term" value="P:positive regulation of growth"/>
    <property type="evidence" value="ECO:0007669"/>
    <property type="project" value="TreeGrafter"/>
</dbReference>
<dbReference type="GO" id="GO:2000376">
    <property type="term" value="P:positive regulation of oxygen metabolic process"/>
    <property type="evidence" value="ECO:0000250"/>
    <property type="project" value="AgBase"/>
</dbReference>
<dbReference type="GO" id="GO:1903408">
    <property type="term" value="P:positive regulation of P-type sodium:potassium-exchanging transporter activity"/>
    <property type="evidence" value="ECO:0000250"/>
    <property type="project" value="AgBase"/>
</dbReference>
<dbReference type="GO" id="GO:0090277">
    <property type="term" value="P:positive regulation of peptide hormone secretion"/>
    <property type="evidence" value="ECO:0000250"/>
    <property type="project" value="AgBase"/>
</dbReference>
<dbReference type="GO" id="GO:0050766">
    <property type="term" value="P:positive regulation of phagocytosis"/>
    <property type="evidence" value="ECO:0000315"/>
    <property type="project" value="AgBase"/>
</dbReference>
<dbReference type="GO" id="GO:0046427">
    <property type="term" value="P:positive regulation of receptor signaling pathway via JAK-STAT"/>
    <property type="evidence" value="ECO:0007669"/>
    <property type="project" value="TreeGrafter"/>
</dbReference>
<dbReference type="GO" id="GO:0032930">
    <property type="term" value="P:positive regulation of superoxide anion generation"/>
    <property type="evidence" value="ECO:0000315"/>
    <property type="project" value="AgBase"/>
</dbReference>
<dbReference type="GO" id="GO:1901671">
    <property type="term" value="P:positive regulation of superoxide dismutase activity"/>
    <property type="evidence" value="ECO:0000250"/>
    <property type="project" value="AgBase"/>
</dbReference>
<dbReference type="GO" id="GO:0009306">
    <property type="term" value="P:protein secretion"/>
    <property type="evidence" value="ECO:0000250"/>
    <property type="project" value="AgBase"/>
</dbReference>
<dbReference type="GO" id="GO:0002637">
    <property type="term" value="P:regulation of immunoglobulin production"/>
    <property type="evidence" value="ECO:0000315"/>
    <property type="project" value="AgBase"/>
</dbReference>
<dbReference type="GO" id="GO:1903350">
    <property type="term" value="P:response to dopamine"/>
    <property type="evidence" value="ECO:0000250"/>
    <property type="project" value="AgBase"/>
</dbReference>
<dbReference type="GO" id="GO:0060416">
    <property type="term" value="P:response to growth hormone"/>
    <property type="evidence" value="ECO:0000250"/>
    <property type="project" value="AgBase"/>
</dbReference>
<dbReference type="GO" id="GO:0042594">
    <property type="term" value="P:response to starvation"/>
    <property type="evidence" value="ECO:0000250"/>
    <property type="project" value="AgBase"/>
</dbReference>
<dbReference type="GO" id="GO:0009266">
    <property type="term" value="P:response to temperature stimulus"/>
    <property type="evidence" value="ECO:0000250"/>
    <property type="project" value="AgBase"/>
</dbReference>
<dbReference type="GO" id="GO:0055078">
    <property type="term" value="P:sodium ion homeostasis"/>
    <property type="evidence" value="ECO:0000315"/>
    <property type="project" value="AgBase"/>
</dbReference>
<dbReference type="CDD" id="cd10285">
    <property type="entry name" value="somatotropin_like"/>
    <property type="match status" value="1"/>
</dbReference>
<dbReference type="FunFam" id="1.20.1250.10:FF:000009">
    <property type="entry name" value="Growth hormone"/>
    <property type="match status" value="1"/>
</dbReference>
<dbReference type="Gene3D" id="1.20.1250.10">
    <property type="match status" value="1"/>
</dbReference>
<dbReference type="InterPro" id="IPR009079">
    <property type="entry name" value="4_helix_cytokine-like_core"/>
</dbReference>
<dbReference type="InterPro" id="IPR034975">
    <property type="entry name" value="Somatotropin"/>
</dbReference>
<dbReference type="InterPro" id="IPR001400">
    <property type="entry name" value="Somatotropin/Prolactin"/>
</dbReference>
<dbReference type="InterPro" id="IPR018116">
    <property type="entry name" value="Somatotropin_CS"/>
</dbReference>
<dbReference type="PANTHER" id="PTHR11417:SF2">
    <property type="entry name" value="SOMATOTROPIN"/>
    <property type="match status" value="1"/>
</dbReference>
<dbReference type="PANTHER" id="PTHR11417">
    <property type="entry name" value="SOMATOTROPIN,PROLACTIN"/>
    <property type="match status" value="1"/>
</dbReference>
<dbReference type="Pfam" id="PF00103">
    <property type="entry name" value="Hormone_1"/>
    <property type="match status" value="1"/>
</dbReference>
<dbReference type="PRINTS" id="PR00836">
    <property type="entry name" value="SOMATOTROPIN"/>
</dbReference>
<dbReference type="SUPFAM" id="SSF47266">
    <property type="entry name" value="4-helical cytokines"/>
    <property type="match status" value="1"/>
</dbReference>
<dbReference type="PROSITE" id="PS00266">
    <property type="entry name" value="SOMATOTROPIN_1"/>
    <property type="match status" value="1"/>
</dbReference>
<dbReference type="PROSITE" id="PS00338">
    <property type="entry name" value="SOMATOTROPIN_2"/>
    <property type="match status" value="1"/>
</dbReference>
<protein>
    <recommendedName>
        <fullName>Somatotropin</fullName>
    </recommendedName>
    <alternativeName>
        <fullName>Growth hormone</fullName>
    </alternativeName>
</protein>
<proteinExistence type="evidence at protein level"/>